<feature type="chain" id="PRO_1000187112" description="2-succinyl-6-hydroxy-2,4-cyclohexadiene-1-carboxylate synthase">
    <location>
        <begin position="1"/>
        <end position="252"/>
    </location>
</feature>
<evidence type="ECO:0000255" key="1">
    <source>
        <dbReference type="HAMAP-Rule" id="MF_01660"/>
    </source>
</evidence>
<gene>
    <name evidence="1" type="primary">menH</name>
    <name type="ordered locus">EFER_0905</name>
</gene>
<comment type="function">
    <text evidence="1">Catalyzes a proton abstraction reaction that results in 2,5-elimination of pyruvate from 2-succinyl-5-enolpyruvyl-6-hydroxy-3-cyclohexene-1-carboxylate (SEPHCHC) and the formation of 2-succinyl-6-hydroxy-2,4-cyclohexadiene-1-carboxylate (SHCHC).</text>
</comment>
<comment type="catalytic activity">
    <reaction evidence="1">
        <text>5-enolpyruvoyl-6-hydroxy-2-succinyl-cyclohex-3-ene-1-carboxylate = (1R,6R)-6-hydroxy-2-succinyl-cyclohexa-2,4-diene-1-carboxylate + pyruvate</text>
        <dbReference type="Rhea" id="RHEA:25597"/>
        <dbReference type="ChEBI" id="CHEBI:15361"/>
        <dbReference type="ChEBI" id="CHEBI:58689"/>
        <dbReference type="ChEBI" id="CHEBI:58818"/>
        <dbReference type="EC" id="4.2.99.20"/>
    </reaction>
</comment>
<comment type="pathway">
    <text evidence="1">Quinol/quinone metabolism; 1,4-dihydroxy-2-naphthoate biosynthesis; 1,4-dihydroxy-2-naphthoate from chorismate: step 3/7.</text>
</comment>
<comment type="pathway">
    <text evidence="1">Quinol/quinone metabolism; menaquinone biosynthesis.</text>
</comment>
<comment type="subunit">
    <text evidence="1">Monomer.</text>
</comment>
<comment type="similarity">
    <text evidence="1">Belongs to the AB hydrolase superfamily. MenH family.</text>
</comment>
<name>MENH_ESCF3</name>
<protein>
    <recommendedName>
        <fullName evidence="1">2-succinyl-6-hydroxy-2,4-cyclohexadiene-1-carboxylate synthase</fullName>
        <shortName evidence="1">SHCHC synthase</shortName>
        <ecNumber evidence="1">4.2.99.20</ecNumber>
    </recommendedName>
</protein>
<organism>
    <name type="scientific">Escherichia fergusonii (strain ATCC 35469 / DSM 13698 / CCUG 18766 / IAM 14443 / JCM 21226 / LMG 7866 / NBRC 102419 / NCTC 12128 / CDC 0568-73)</name>
    <dbReference type="NCBI Taxonomy" id="585054"/>
    <lineage>
        <taxon>Bacteria</taxon>
        <taxon>Pseudomonadati</taxon>
        <taxon>Pseudomonadota</taxon>
        <taxon>Gammaproteobacteria</taxon>
        <taxon>Enterobacterales</taxon>
        <taxon>Enterobacteriaceae</taxon>
        <taxon>Escherichia</taxon>
    </lineage>
</organism>
<dbReference type="EC" id="4.2.99.20" evidence="1"/>
<dbReference type="EMBL" id="CU928158">
    <property type="protein sequence ID" value="CAQ88440.1"/>
    <property type="molecule type" value="Genomic_DNA"/>
</dbReference>
<dbReference type="RefSeq" id="WP_000600515.1">
    <property type="nucleotide sequence ID" value="NC_011740.1"/>
</dbReference>
<dbReference type="SMR" id="B7LM67"/>
<dbReference type="ESTHER" id="ecoli-YFBB">
    <property type="family name" value="MenH_SHCHC"/>
</dbReference>
<dbReference type="GeneID" id="75058036"/>
<dbReference type="KEGG" id="efe:EFER_0905"/>
<dbReference type="HOGENOM" id="CLU_020336_38_2_6"/>
<dbReference type="OrthoDB" id="9808398at2"/>
<dbReference type="UniPathway" id="UPA00079"/>
<dbReference type="UniPathway" id="UPA01057">
    <property type="reaction ID" value="UER00900"/>
</dbReference>
<dbReference type="Proteomes" id="UP000000745">
    <property type="component" value="Chromosome"/>
</dbReference>
<dbReference type="GO" id="GO:0070205">
    <property type="term" value="F:2-succinyl-6-hydroxy-2,4-cyclohexadiene-1-carboxylate synthase activity"/>
    <property type="evidence" value="ECO:0007669"/>
    <property type="project" value="UniProtKB-UniRule"/>
</dbReference>
<dbReference type="GO" id="GO:0009234">
    <property type="term" value="P:menaquinone biosynthetic process"/>
    <property type="evidence" value="ECO:0007669"/>
    <property type="project" value="UniProtKB-UniRule"/>
</dbReference>
<dbReference type="FunFam" id="3.40.50.1820:FF:000038">
    <property type="entry name" value="2-succinyl-6-hydroxy-2,4-cyclohexadiene-1-carboxylate synthase"/>
    <property type="match status" value="1"/>
</dbReference>
<dbReference type="Gene3D" id="3.40.50.1820">
    <property type="entry name" value="alpha/beta hydrolase"/>
    <property type="match status" value="1"/>
</dbReference>
<dbReference type="HAMAP" id="MF_01660">
    <property type="entry name" value="MenH"/>
    <property type="match status" value="1"/>
</dbReference>
<dbReference type="InterPro" id="IPR000073">
    <property type="entry name" value="AB_hydrolase_1"/>
</dbReference>
<dbReference type="InterPro" id="IPR029058">
    <property type="entry name" value="AB_hydrolase_fold"/>
</dbReference>
<dbReference type="InterPro" id="IPR022485">
    <property type="entry name" value="SHCHC_synthase_MenH"/>
</dbReference>
<dbReference type="NCBIfam" id="TIGR03695">
    <property type="entry name" value="menH_SHCHC"/>
    <property type="match status" value="1"/>
</dbReference>
<dbReference type="NCBIfam" id="NF008340">
    <property type="entry name" value="PRK11126.1"/>
    <property type="match status" value="1"/>
</dbReference>
<dbReference type="PANTHER" id="PTHR42916">
    <property type="entry name" value="2-SUCCINYL-5-ENOLPYRUVYL-6-HYDROXY-3-CYCLOHEXENE-1-CARBOXYLATE SYNTHASE"/>
    <property type="match status" value="1"/>
</dbReference>
<dbReference type="PANTHER" id="PTHR42916:SF1">
    <property type="entry name" value="PROTEIN PHYLLO, CHLOROPLASTIC"/>
    <property type="match status" value="1"/>
</dbReference>
<dbReference type="Pfam" id="PF12697">
    <property type="entry name" value="Abhydrolase_6"/>
    <property type="match status" value="1"/>
</dbReference>
<dbReference type="SUPFAM" id="SSF53474">
    <property type="entry name" value="alpha/beta-Hydrolases"/>
    <property type="match status" value="1"/>
</dbReference>
<sequence>MILHAQAKHGKPGLPWLVFLHGFSGDCHEWQEVGEAFADYSRLYVDLPGHGGSAAISVDGFDDVTGLLRKTLVSYNILNFWLVGYSLGGRVAMMAACQGMPGLCGVIVEGGHPGLQSAEQRAERQLSDRQWAQRFRSEPLTAVFTDWYQQPVFASLNDDQRRELVALRSNNNGATLAAMLEATSLAVQPDLRANLSARTFAFYYLCGERDSKFRALAAELAADCHVIPRAGHNTHRENPAGVIASLAQILRF</sequence>
<reference key="1">
    <citation type="journal article" date="2009" name="PLoS Genet.">
        <title>Organised genome dynamics in the Escherichia coli species results in highly diverse adaptive paths.</title>
        <authorList>
            <person name="Touchon M."/>
            <person name="Hoede C."/>
            <person name="Tenaillon O."/>
            <person name="Barbe V."/>
            <person name="Baeriswyl S."/>
            <person name="Bidet P."/>
            <person name="Bingen E."/>
            <person name="Bonacorsi S."/>
            <person name="Bouchier C."/>
            <person name="Bouvet O."/>
            <person name="Calteau A."/>
            <person name="Chiapello H."/>
            <person name="Clermont O."/>
            <person name="Cruveiller S."/>
            <person name="Danchin A."/>
            <person name="Diard M."/>
            <person name="Dossat C."/>
            <person name="Karoui M.E."/>
            <person name="Frapy E."/>
            <person name="Garry L."/>
            <person name="Ghigo J.M."/>
            <person name="Gilles A.M."/>
            <person name="Johnson J."/>
            <person name="Le Bouguenec C."/>
            <person name="Lescat M."/>
            <person name="Mangenot S."/>
            <person name="Martinez-Jehanne V."/>
            <person name="Matic I."/>
            <person name="Nassif X."/>
            <person name="Oztas S."/>
            <person name="Petit M.A."/>
            <person name="Pichon C."/>
            <person name="Rouy Z."/>
            <person name="Ruf C.S."/>
            <person name="Schneider D."/>
            <person name="Tourret J."/>
            <person name="Vacherie B."/>
            <person name="Vallenet D."/>
            <person name="Medigue C."/>
            <person name="Rocha E.P.C."/>
            <person name="Denamur E."/>
        </authorList>
    </citation>
    <scope>NUCLEOTIDE SEQUENCE [LARGE SCALE GENOMIC DNA]</scope>
    <source>
        <strain>ATCC 35469 / DSM 13698 / BCRC 15582 / CCUG 18766 / IAM 14443 / JCM 21226 / LMG 7866 / NBRC 102419 / NCTC 12128 / CDC 0568-73</strain>
    </source>
</reference>
<proteinExistence type="inferred from homology"/>
<accession>B7LM67</accession>
<keyword id="KW-0456">Lyase</keyword>
<keyword id="KW-0474">Menaquinone biosynthesis</keyword>